<protein>
    <recommendedName>
        <fullName evidence="1">2-keto-4-pentenoate hydratase</fullName>
        <ecNumber evidence="1">4.2.1.80</ecNumber>
    </recommendedName>
    <alternativeName>
        <fullName evidence="1">2-hydroxypentadienoic acid hydratase</fullName>
    </alternativeName>
</protein>
<organism>
    <name type="scientific">Escherichia coli O139:H28 (strain E24377A / ETEC)</name>
    <dbReference type="NCBI Taxonomy" id="331111"/>
    <lineage>
        <taxon>Bacteria</taxon>
        <taxon>Pseudomonadati</taxon>
        <taxon>Pseudomonadota</taxon>
        <taxon>Gammaproteobacteria</taxon>
        <taxon>Enterobacterales</taxon>
        <taxon>Enterobacteriaceae</taxon>
        <taxon>Escherichia</taxon>
    </lineage>
</organism>
<feature type="chain" id="PRO_0000337793" description="2-keto-4-pentenoate hydratase">
    <location>
        <begin position="1"/>
        <end position="269"/>
    </location>
</feature>
<evidence type="ECO:0000255" key="1">
    <source>
        <dbReference type="HAMAP-Rule" id="MF_01655"/>
    </source>
</evidence>
<sequence>MTKHTLEQLAADLRRAAEQGEAIAPLRDLIGIDNAEAAYAIQHINVQYDVVQGRRVVGRKVGLTHPKVQQQLGVDQPDFGTLFADMCYGDNEIIPFSRVLQPRIEAEIALVLNRDLPATDITFDELYNAIEWVLPALEVVGSRIRDWSIQFVDTVADNASCGVYVIGGPAQRPAGLDLKNCAMKMTRNNEEVSSGRGSECLGHPLNAAVWLARKMASLGEPLRAGDIILTGALGPMVAVNAGDRFEAHIEGIGSVAATFSSAAPKGSLS</sequence>
<dbReference type="EC" id="4.2.1.80" evidence="1"/>
<dbReference type="EMBL" id="CP000800">
    <property type="protein sequence ID" value="ABV17981.1"/>
    <property type="molecule type" value="Genomic_DNA"/>
</dbReference>
<dbReference type="RefSeq" id="WP_000160734.1">
    <property type="nucleotide sequence ID" value="NC_009801.1"/>
</dbReference>
<dbReference type="SMR" id="A7ZI97"/>
<dbReference type="KEGG" id="ecw:EcE24377A_0374"/>
<dbReference type="HOGENOM" id="CLU_060136_4_1_6"/>
<dbReference type="UniPathway" id="UPA00714"/>
<dbReference type="Proteomes" id="UP000001122">
    <property type="component" value="Chromosome"/>
</dbReference>
<dbReference type="GO" id="GO:0005737">
    <property type="term" value="C:cytoplasm"/>
    <property type="evidence" value="ECO:0007669"/>
    <property type="project" value="TreeGrafter"/>
</dbReference>
<dbReference type="GO" id="GO:0008684">
    <property type="term" value="F:2-oxopent-4-enoate hydratase activity"/>
    <property type="evidence" value="ECO:0007669"/>
    <property type="project" value="UniProtKB-UniRule"/>
</dbReference>
<dbReference type="GO" id="GO:0030145">
    <property type="term" value="F:manganese ion binding"/>
    <property type="evidence" value="ECO:0007669"/>
    <property type="project" value="InterPro"/>
</dbReference>
<dbReference type="GO" id="GO:0019380">
    <property type="term" value="P:3-phenylpropionate catabolic process"/>
    <property type="evidence" value="ECO:0007669"/>
    <property type="project" value="UniProtKB-UniRule"/>
</dbReference>
<dbReference type="FunFam" id="3.90.850.10:FF:000006">
    <property type="entry name" value="2-keto-4-pentenoate hydratase"/>
    <property type="match status" value="1"/>
</dbReference>
<dbReference type="Gene3D" id="3.90.850.10">
    <property type="entry name" value="Fumarylacetoacetase-like, C-terminal domain"/>
    <property type="match status" value="1"/>
</dbReference>
<dbReference type="HAMAP" id="MF_01655">
    <property type="entry name" value="MhpD"/>
    <property type="match status" value="1"/>
</dbReference>
<dbReference type="InterPro" id="IPR011234">
    <property type="entry name" value="Fumarylacetoacetase-like_C"/>
</dbReference>
<dbReference type="InterPro" id="IPR036663">
    <property type="entry name" value="Fumarylacetoacetase_C_sf"/>
</dbReference>
<dbReference type="InterPro" id="IPR050772">
    <property type="entry name" value="Hydratase-Decarb/MhpD_sf"/>
</dbReference>
<dbReference type="InterPro" id="IPR023793">
    <property type="entry name" value="Keto_pentenoate-hydratase"/>
</dbReference>
<dbReference type="NCBIfam" id="NF008461">
    <property type="entry name" value="PRK11342.1"/>
    <property type="match status" value="1"/>
</dbReference>
<dbReference type="PANTHER" id="PTHR30143:SF0">
    <property type="entry name" value="2-KETO-4-PENTENOATE HYDRATASE"/>
    <property type="match status" value="1"/>
</dbReference>
<dbReference type="PANTHER" id="PTHR30143">
    <property type="entry name" value="ACID HYDRATASE"/>
    <property type="match status" value="1"/>
</dbReference>
<dbReference type="Pfam" id="PF01557">
    <property type="entry name" value="FAA_hydrolase"/>
    <property type="match status" value="1"/>
</dbReference>
<dbReference type="SUPFAM" id="SSF56529">
    <property type="entry name" value="FAH"/>
    <property type="match status" value="1"/>
</dbReference>
<reference key="1">
    <citation type="journal article" date="2008" name="J. Bacteriol.">
        <title>The pangenome structure of Escherichia coli: comparative genomic analysis of E. coli commensal and pathogenic isolates.</title>
        <authorList>
            <person name="Rasko D.A."/>
            <person name="Rosovitz M.J."/>
            <person name="Myers G.S.A."/>
            <person name="Mongodin E.F."/>
            <person name="Fricke W.F."/>
            <person name="Gajer P."/>
            <person name="Crabtree J."/>
            <person name="Sebaihia M."/>
            <person name="Thomson N.R."/>
            <person name="Chaudhuri R."/>
            <person name="Henderson I.R."/>
            <person name="Sperandio V."/>
            <person name="Ravel J."/>
        </authorList>
    </citation>
    <scope>NUCLEOTIDE SEQUENCE [LARGE SCALE GENOMIC DNA]</scope>
    <source>
        <strain>E24377A / ETEC</strain>
    </source>
</reference>
<gene>
    <name evidence="1" type="primary">mhpD</name>
    <name type="ordered locus">EcE24377A_0374</name>
</gene>
<comment type="function">
    <text evidence="1">Catalyzes the conversion of 2-hydroxypentadienoic acid (enolic form of 2-oxopent-4-enoate) to 4-hydroxy-2-ketopentanoic acid.</text>
</comment>
<comment type="catalytic activity">
    <reaction evidence="1">
        <text>(S)-4-hydroxy-2-oxopentanoate = (2Z)-2-hydroxypenta-2,4-dienoate + H2O</text>
        <dbReference type="Rhea" id="RHEA:22580"/>
        <dbReference type="ChEBI" id="CHEBI:15377"/>
        <dbReference type="ChEBI" id="CHEBI:67152"/>
        <dbReference type="ChEBI" id="CHEBI:73143"/>
        <dbReference type="EC" id="4.2.1.80"/>
    </reaction>
</comment>
<comment type="cofactor">
    <cofactor evidence="1">
        <name>a divalent metal cation</name>
        <dbReference type="ChEBI" id="CHEBI:60240"/>
    </cofactor>
</comment>
<comment type="pathway">
    <text evidence="1">Aromatic compound metabolism; 3-phenylpropanoate degradation.</text>
</comment>
<comment type="similarity">
    <text evidence="1">Belongs to the hydratase/decarboxylase family. MhpD subfamily.</text>
</comment>
<proteinExistence type="inferred from homology"/>
<name>MHPD_ECO24</name>
<accession>A7ZI97</accession>
<keyword id="KW-0058">Aromatic hydrocarbons catabolism</keyword>
<keyword id="KW-0456">Lyase</keyword>
<keyword id="KW-1185">Reference proteome</keyword>